<evidence type="ECO:0000250" key="1">
    <source>
        <dbReference type="UniProtKB" id="O58832"/>
    </source>
</evidence>
<evidence type="ECO:0000250" key="2">
    <source>
        <dbReference type="UniProtKB" id="P40487"/>
    </source>
</evidence>
<evidence type="ECO:0000250" key="3">
    <source>
        <dbReference type="UniProtKB" id="Q5NCQ5"/>
    </source>
</evidence>
<evidence type="ECO:0000305" key="4"/>
<reference key="1">
    <citation type="submission" date="2005-04" db="EMBL/GenBank/DDBJ databases">
        <authorList>
            <consortium name="NIH - Zebrafish Gene Collection (ZGC) project"/>
        </authorList>
    </citation>
    <scope>NUCLEOTIDE SEQUENCE [LARGE SCALE MRNA]</scope>
    <source>
        <tissue>Embryo</tissue>
    </source>
</reference>
<keyword id="KW-0963">Cytoplasm</keyword>
<keyword id="KW-0408">Iron</keyword>
<keyword id="KW-0411">Iron-sulfur</keyword>
<keyword id="KW-0479">Metal-binding</keyword>
<keyword id="KW-0539">Nucleus</keyword>
<keyword id="KW-1185">Reference proteome</keyword>
<keyword id="KW-0949">S-adenosyl-L-methionine</keyword>
<keyword id="KW-0808">Transferase</keyword>
<comment type="function">
    <text evidence="2 3">Catalyzes the first step of diphthamide biosynthesis, a post-translational modification of histidine which occurs in elongation factor 2 (By similarity). Dph1 and dph2 transfer a 3-amino-3-carboxypropyl (ACP) group from S-adenosyl-L-methionine (SAM) to a histidine residue, the reaction is assisted by a reduction system comprising dph3 and a NADH-dependent reductase (By similarity).</text>
</comment>
<comment type="catalytic activity">
    <reaction evidence="3">
        <text>L-histidyl-[translation elongation factor 2] + S-adenosyl-L-methionine = 2-[(3S)-amino-3-carboxypropyl]-L-histidyl-[translation elongation factor 2] + S-methyl-5'-thioadenosine + H(+)</text>
        <dbReference type="Rhea" id="RHEA:36783"/>
        <dbReference type="Rhea" id="RHEA-COMP:9748"/>
        <dbReference type="Rhea" id="RHEA-COMP:9749"/>
        <dbReference type="ChEBI" id="CHEBI:15378"/>
        <dbReference type="ChEBI" id="CHEBI:17509"/>
        <dbReference type="ChEBI" id="CHEBI:29979"/>
        <dbReference type="ChEBI" id="CHEBI:59789"/>
        <dbReference type="ChEBI" id="CHEBI:73995"/>
        <dbReference type="EC" id="2.5.1.108"/>
    </reaction>
</comment>
<comment type="cofactor">
    <cofactor evidence="2">
        <name>[4Fe-4S] cluster</name>
        <dbReference type="ChEBI" id="CHEBI:49883"/>
    </cofactor>
    <text evidence="2">Binds 1 [4Fe-4S] cluster per subunit. The cluster is coordinated with 3 cysteines and an exchangeable S-adenosyl-L-methionine.</text>
</comment>
<comment type="pathway">
    <text>Protein modification; peptidyl-diphthamide biosynthesis.</text>
</comment>
<comment type="subunit">
    <text evidence="2">Component of the 2-(3-amino-3-carboxypropyl)histidine synthase complex composed of dph1, dph2, dph3 and a NADH-dependent reductase.</text>
</comment>
<comment type="subcellular location">
    <subcellularLocation>
        <location evidence="3">Nucleus</location>
    </subcellularLocation>
    <subcellularLocation>
        <location evidence="3">Cytoplasm</location>
    </subcellularLocation>
</comment>
<comment type="similarity">
    <text evidence="4">Belongs to the DPH1/DPH2 family. DPH1 subfamily.</text>
</comment>
<organism>
    <name type="scientific">Danio rerio</name>
    <name type="common">Zebrafish</name>
    <name type="synonym">Brachydanio rerio</name>
    <dbReference type="NCBI Taxonomy" id="7955"/>
    <lineage>
        <taxon>Eukaryota</taxon>
        <taxon>Metazoa</taxon>
        <taxon>Chordata</taxon>
        <taxon>Craniata</taxon>
        <taxon>Vertebrata</taxon>
        <taxon>Euteleostomi</taxon>
        <taxon>Actinopterygii</taxon>
        <taxon>Neopterygii</taxon>
        <taxon>Teleostei</taxon>
        <taxon>Ostariophysi</taxon>
        <taxon>Cypriniformes</taxon>
        <taxon>Danionidae</taxon>
        <taxon>Danioninae</taxon>
        <taxon>Danio</taxon>
    </lineage>
</organism>
<protein>
    <recommendedName>
        <fullName evidence="4">2-(3-amino-3-carboxypropyl)histidine synthase subunit 1</fullName>
        <ecNumber evidence="3">2.5.1.108</ecNumber>
    </recommendedName>
    <alternativeName>
        <fullName>Diphthamide biosynthesis protein 1</fullName>
    </alternativeName>
    <alternativeName>
        <fullName evidence="4">Diphtheria toxin resistance protein 1</fullName>
    </alternativeName>
    <alternativeName>
        <fullName evidence="4">S-adenosyl-L-methionine:L-histidine 3-amino-3-carboxypropyltransferase 1</fullName>
    </alternativeName>
</protein>
<gene>
    <name type="primary">dph1</name>
    <name type="ORF">zgc:110702</name>
</gene>
<proteinExistence type="evidence at transcript level"/>
<dbReference type="EC" id="2.5.1.108" evidence="3"/>
<dbReference type="EMBL" id="BC092989">
    <property type="protein sequence ID" value="AAH92989.1"/>
    <property type="molecule type" value="mRNA"/>
</dbReference>
<dbReference type="RefSeq" id="NP_001017861.1">
    <property type="nucleotide sequence ID" value="NM_001017861.1"/>
</dbReference>
<dbReference type="SMR" id="Q567W6"/>
<dbReference type="FunCoup" id="Q567W6">
    <property type="interactions" value="1859"/>
</dbReference>
<dbReference type="STRING" id="7955.ENSDARP00000114804"/>
<dbReference type="PaxDb" id="7955-ENSDARP00000101488"/>
<dbReference type="GeneID" id="550559"/>
<dbReference type="KEGG" id="dre:550559"/>
<dbReference type="AGR" id="ZFIN:ZDB-GENE-050417-411"/>
<dbReference type="CTD" id="1801"/>
<dbReference type="ZFIN" id="ZDB-GENE-050417-411">
    <property type="gene designation" value="dph1"/>
</dbReference>
<dbReference type="eggNOG" id="KOG2648">
    <property type="taxonomic scope" value="Eukaryota"/>
</dbReference>
<dbReference type="InParanoid" id="Q567W6"/>
<dbReference type="OrthoDB" id="1649088at2759"/>
<dbReference type="PhylomeDB" id="Q567W6"/>
<dbReference type="Reactome" id="R-DRE-5358493">
    <property type="pathway name" value="Synthesis of diphthamide-EEF2"/>
</dbReference>
<dbReference type="UniPathway" id="UPA00559"/>
<dbReference type="PRO" id="PR:Q567W6"/>
<dbReference type="Proteomes" id="UP000000437">
    <property type="component" value="Chromosome 15"/>
</dbReference>
<dbReference type="GO" id="GO:0120513">
    <property type="term" value="C:2-(3-amino-3-carboxypropyl)histidine synthase complex"/>
    <property type="evidence" value="ECO:0000250"/>
    <property type="project" value="UniProtKB"/>
</dbReference>
<dbReference type="GO" id="GO:0005737">
    <property type="term" value="C:cytoplasm"/>
    <property type="evidence" value="ECO:0007669"/>
    <property type="project" value="UniProtKB-SubCell"/>
</dbReference>
<dbReference type="GO" id="GO:0005634">
    <property type="term" value="C:nucleus"/>
    <property type="evidence" value="ECO:0007669"/>
    <property type="project" value="UniProtKB-SubCell"/>
</dbReference>
<dbReference type="GO" id="GO:0090560">
    <property type="term" value="F:2-(3-amino-3-carboxypropyl)histidine synthase activity"/>
    <property type="evidence" value="ECO:0007669"/>
    <property type="project" value="UniProtKB-EC"/>
</dbReference>
<dbReference type="GO" id="GO:0051539">
    <property type="term" value="F:4 iron, 4 sulfur cluster binding"/>
    <property type="evidence" value="ECO:0000250"/>
    <property type="project" value="UniProtKB"/>
</dbReference>
<dbReference type="GO" id="GO:0046872">
    <property type="term" value="F:metal ion binding"/>
    <property type="evidence" value="ECO:0007669"/>
    <property type="project" value="UniProtKB-KW"/>
</dbReference>
<dbReference type="GO" id="GO:0017183">
    <property type="term" value="P:protein histidyl modification to diphthamide"/>
    <property type="evidence" value="ECO:0000250"/>
    <property type="project" value="UniProtKB"/>
</dbReference>
<dbReference type="FunFam" id="3.40.50.11840:FF:000001">
    <property type="entry name" value="2-(3-amino-3-carboxypropyl)histidine synthase subunit 1"/>
    <property type="match status" value="1"/>
</dbReference>
<dbReference type="FunFam" id="3.40.50.11850:FF:000001">
    <property type="entry name" value="2-(3-amino-3-carboxypropyl)histidine synthase subunit 1"/>
    <property type="match status" value="1"/>
</dbReference>
<dbReference type="Gene3D" id="3.40.50.11840">
    <property type="entry name" value="Diphthamide synthesis DPH1/DPH2 domain 1"/>
    <property type="match status" value="1"/>
</dbReference>
<dbReference type="Gene3D" id="3.40.50.11850">
    <property type="entry name" value="Diphthamide synthesis DPH1/DPH2 domain 2"/>
    <property type="match status" value="1"/>
</dbReference>
<dbReference type="Gene3D" id="3.40.50.11860">
    <property type="entry name" value="Diphthamide synthesis DPH1/DPH2 domain 3"/>
    <property type="match status" value="1"/>
</dbReference>
<dbReference type="InterPro" id="IPR016435">
    <property type="entry name" value="DPH1/DPH2"/>
</dbReference>
<dbReference type="InterPro" id="IPR042263">
    <property type="entry name" value="DPH1/DPH2_1"/>
</dbReference>
<dbReference type="InterPro" id="IPR042264">
    <property type="entry name" value="DPH1/DPH2_2"/>
</dbReference>
<dbReference type="InterPro" id="IPR042265">
    <property type="entry name" value="DPH1/DPH2_3"/>
</dbReference>
<dbReference type="NCBIfam" id="TIGR00322">
    <property type="entry name" value="diphth2_R"/>
    <property type="match status" value="1"/>
</dbReference>
<dbReference type="PANTHER" id="PTHR10762:SF1">
    <property type="entry name" value="2-(3-AMINO-3-CARBOXYPROPYL)HISTIDINE SYNTHASE SUBUNIT 1"/>
    <property type="match status" value="1"/>
</dbReference>
<dbReference type="PANTHER" id="PTHR10762">
    <property type="entry name" value="DIPHTHAMIDE BIOSYNTHESIS PROTEIN"/>
    <property type="match status" value="1"/>
</dbReference>
<dbReference type="Pfam" id="PF01866">
    <property type="entry name" value="Diphthamide_syn"/>
    <property type="match status" value="1"/>
</dbReference>
<dbReference type="SFLD" id="SFLDS00032">
    <property type="entry name" value="Radical_SAM_3-amino-3-carboxyp"/>
    <property type="match status" value="1"/>
</dbReference>
<feature type="chain" id="PRO_0000307885" description="2-(3-amino-3-carboxypropyl)histidine synthase subunit 1">
    <location>
        <begin position="1"/>
        <end position="381"/>
    </location>
</feature>
<feature type="binding site" evidence="1">
    <location>
        <position position="106"/>
    </location>
    <ligand>
        <name>[4Fe-4S] cluster</name>
        <dbReference type="ChEBI" id="CHEBI:49883"/>
    </ligand>
</feature>
<feature type="binding site" evidence="1">
    <location>
        <position position="209"/>
    </location>
    <ligand>
        <name>[4Fe-4S] cluster</name>
        <dbReference type="ChEBI" id="CHEBI:49883"/>
    </ligand>
</feature>
<feature type="binding site" evidence="4">
    <location>
        <position position="344"/>
    </location>
    <ligand>
        <name>[4Fe-4S] cluster</name>
        <dbReference type="ChEBI" id="CHEBI:49883"/>
    </ligand>
</feature>
<sequence length="381" mass="42770">MAASSSELEVITAKKPNVKGPRRVANQIPEEILKDSDLNEAIKALPANYNFEIHKTIWRVRQAKAKRVALQLPEGLQMFACVIADIIERFTEADTLVMGDVTYGACCVDDFTARALGADFMVHYGHSCLIPIDSTEGIKMLYVFVDIQIDTAHFLDTLRFNFPPGRSLALVSTIQFVAALQAASAALKPDYEVLVPQCRPLSPGEILGCTSPRLDKHVNAVIYLGDGRFHLESIMIANPDTPAYRYDPYSKVFSREYYDHDAMRATRLKAIESACSAQRWGLILGTLGRQGNPKILEHLESQLKSLGRSFTRVLLSEIFPRKLELLADVDAQQWRYSRLDGRMCIPWISIPIRVWGPGLLIIRITNLNGLHAKPHRRLVSR</sequence>
<accession>Q567W6</accession>
<name>DPH1_DANRE</name>